<evidence type="ECO:0000255" key="1"/>
<evidence type="ECO:0000255" key="2">
    <source>
        <dbReference type="HAMAP-Rule" id="MF_01036"/>
    </source>
</evidence>
<proteinExistence type="inferred from homology"/>
<organism>
    <name type="scientific">Escherichia coli O157:H7</name>
    <dbReference type="NCBI Taxonomy" id="83334"/>
    <lineage>
        <taxon>Bacteria</taxon>
        <taxon>Pseudomonadati</taxon>
        <taxon>Pseudomonadota</taxon>
        <taxon>Gammaproteobacteria</taxon>
        <taxon>Enterobacterales</taxon>
        <taxon>Enterobacteriaceae</taxon>
        <taxon>Escherichia</taxon>
    </lineage>
</organism>
<dbReference type="EC" id="3.1.13.1" evidence="2"/>
<dbReference type="EMBL" id="AE005174">
    <property type="protein sequence ID" value="AAG56526.1"/>
    <property type="molecule type" value="Genomic_DNA"/>
</dbReference>
<dbReference type="EMBL" id="BA000007">
    <property type="protein sequence ID" value="BAB35282.1"/>
    <property type="molecule type" value="Genomic_DNA"/>
</dbReference>
<dbReference type="PIR" id="B85758">
    <property type="entry name" value="B85758"/>
</dbReference>
<dbReference type="PIR" id="C90861">
    <property type="entry name" value="C90861"/>
</dbReference>
<dbReference type="RefSeq" id="NP_309886.1">
    <property type="nucleotide sequence ID" value="NC_002695.1"/>
</dbReference>
<dbReference type="RefSeq" id="WP_000485019.1">
    <property type="nucleotide sequence ID" value="NZ_VOAI01000015.1"/>
</dbReference>
<dbReference type="SMR" id="Q8X7D6"/>
<dbReference type="STRING" id="155864.Z2514"/>
<dbReference type="GeneID" id="912791"/>
<dbReference type="KEGG" id="ece:Z2514"/>
<dbReference type="KEGG" id="ecs:ECs_1859"/>
<dbReference type="PATRIC" id="fig|386585.9.peg.1960"/>
<dbReference type="eggNOG" id="COG4776">
    <property type="taxonomic scope" value="Bacteria"/>
</dbReference>
<dbReference type="HOGENOM" id="CLU_002333_7_3_6"/>
<dbReference type="OMA" id="MVNHRLI"/>
<dbReference type="Proteomes" id="UP000000558">
    <property type="component" value="Chromosome"/>
</dbReference>
<dbReference type="Proteomes" id="UP000002519">
    <property type="component" value="Chromosome"/>
</dbReference>
<dbReference type="GO" id="GO:0005829">
    <property type="term" value="C:cytosol"/>
    <property type="evidence" value="ECO:0007669"/>
    <property type="project" value="TreeGrafter"/>
</dbReference>
<dbReference type="GO" id="GO:0008859">
    <property type="term" value="F:exoribonuclease II activity"/>
    <property type="evidence" value="ECO:0007669"/>
    <property type="project" value="UniProtKB-UniRule"/>
</dbReference>
<dbReference type="GO" id="GO:0003723">
    <property type="term" value="F:RNA binding"/>
    <property type="evidence" value="ECO:0007669"/>
    <property type="project" value="UniProtKB-KW"/>
</dbReference>
<dbReference type="GO" id="GO:0006402">
    <property type="term" value="P:mRNA catabolic process"/>
    <property type="evidence" value="ECO:0007669"/>
    <property type="project" value="UniProtKB-UniRule"/>
</dbReference>
<dbReference type="FunFam" id="2.40.50.140:FF:000079">
    <property type="entry name" value="Exoribonuclease 2"/>
    <property type="match status" value="1"/>
</dbReference>
<dbReference type="FunFam" id="2.40.50.140:FF:000081">
    <property type="entry name" value="Exoribonuclease 2"/>
    <property type="match status" value="1"/>
</dbReference>
<dbReference type="FunFam" id="2.40.50.640:FF:000001">
    <property type="entry name" value="Exoribonuclease 2"/>
    <property type="match status" value="1"/>
</dbReference>
<dbReference type="Gene3D" id="2.40.50.640">
    <property type="match status" value="1"/>
</dbReference>
<dbReference type="Gene3D" id="2.40.50.140">
    <property type="entry name" value="Nucleic acid-binding proteins"/>
    <property type="match status" value="2"/>
</dbReference>
<dbReference type="HAMAP" id="MF_01036">
    <property type="entry name" value="RNase_II"/>
    <property type="match status" value="1"/>
</dbReference>
<dbReference type="InterPro" id="IPR011129">
    <property type="entry name" value="CSD"/>
</dbReference>
<dbReference type="InterPro" id="IPR012340">
    <property type="entry name" value="NA-bd_OB-fold"/>
</dbReference>
<dbReference type="InterPro" id="IPR013223">
    <property type="entry name" value="RNase_B_OB_dom"/>
</dbReference>
<dbReference type="InterPro" id="IPR011804">
    <property type="entry name" value="RNase_II"/>
</dbReference>
<dbReference type="InterPro" id="IPR001900">
    <property type="entry name" value="RNase_II/R"/>
</dbReference>
<dbReference type="InterPro" id="IPR022966">
    <property type="entry name" value="RNase_II/R_CS"/>
</dbReference>
<dbReference type="InterPro" id="IPR004476">
    <property type="entry name" value="RNase_II/RNase_R"/>
</dbReference>
<dbReference type="InterPro" id="IPR050180">
    <property type="entry name" value="RNR_Ribonuclease"/>
</dbReference>
<dbReference type="InterPro" id="IPR003029">
    <property type="entry name" value="S1_domain"/>
</dbReference>
<dbReference type="NCBIfam" id="TIGR00358">
    <property type="entry name" value="3_prime_RNase"/>
    <property type="match status" value="1"/>
</dbReference>
<dbReference type="NCBIfam" id="NF003455">
    <property type="entry name" value="PRK05054.1"/>
    <property type="match status" value="1"/>
</dbReference>
<dbReference type="NCBIfam" id="TIGR02062">
    <property type="entry name" value="RNase_B"/>
    <property type="match status" value="1"/>
</dbReference>
<dbReference type="PANTHER" id="PTHR23355:SF37">
    <property type="entry name" value="EXORIBONUCLEASE 2"/>
    <property type="match status" value="1"/>
</dbReference>
<dbReference type="PANTHER" id="PTHR23355">
    <property type="entry name" value="RIBONUCLEASE"/>
    <property type="match status" value="1"/>
</dbReference>
<dbReference type="Pfam" id="PF08206">
    <property type="entry name" value="OB_RNB"/>
    <property type="match status" value="1"/>
</dbReference>
<dbReference type="Pfam" id="PF00773">
    <property type="entry name" value="RNB"/>
    <property type="match status" value="1"/>
</dbReference>
<dbReference type="Pfam" id="PF00575">
    <property type="entry name" value="S1"/>
    <property type="match status" value="1"/>
</dbReference>
<dbReference type="SMART" id="SM00357">
    <property type="entry name" value="CSP"/>
    <property type="match status" value="1"/>
</dbReference>
<dbReference type="SMART" id="SM00955">
    <property type="entry name" value="RNB"/>
    <property type="match status" value="1"/>
</dbReference>
<dbReference type="SUPFAM" id="SSF50249">
    <property type="entry name" value="Nucleic acid-binding proteins"/>
    <property type="match status" value="4"/>
</dbReference>
<dbReference type="PROSITE" id="PS01175">
    <property type="entry name" value="RIBONUCLEASE_II"/>
    <property type="match status" value="1"/>
</dbReference>
<keyword id="KW-0963">Cytoplasm</keyword>
<keyword id="KW-0269">Exonuclease</keyword>
<keyword id="KW-0378">Hydrolase</keyword>
<keyword id="KW-0540">Nuclease</keyword>
<keyword id="KW-1185">Reference proteome</keyword>
<keyword id="KW-0694">RNA-binding</keyword>
<feature type="chain" id="PRO_0000166382" description="Exoribonuclease 2">
    <location>
        <begin position="1"/>
        <end position="644"/>
    </location>
</feature>
<feature type="domain" description="RNB" evidence="1">
    <location>
        <begin position="189"/>
        <end position="516"/>
    </location>
</feature>
<feature type="domain" description="S1 motif" evidence="2">
    <location>
        <begin position="561"/>
        <end position="643"/>
    </location>
</feature>
<reference key="1">
    <citation type="journal article" date="2001" name="Nature">
        <title>Genome sequence of enterohaemorrhagic Escherichia coli O157:H7.</title>
        <authorList>
            <person name="Perna N.T."/>
            <person name="Plunkett G. III"/>
            <person name="Burland V."/>
            <person name="Mau B."/>
            <person name="Glasner J.D."/>
            <person name="Rose D.J."/>
            <person name="Mayhew G.F."/>
            <person name="Evans P.S."/>
            <person name="Gregor J."/>
            <person name="Kirkpatrick H.A."/>
            <person name="Posfai G."/>
            <person name="Hackett J."/>
            <person name="Klink S."/>
            <person name="Boutin A."/>
            <person name="Shao Y."/>
            <person name="Miller L."/>
            <person name="Grotbeck E.J."/>
            <person name="Davis N.W."/>
            <person name="Lim A."/>
            <person name="Dimalanta E.T."/>
            <person name="Potamousis K."/>
            <person name="Apodaca J."/>
            <person name="Anantharaman T.S."/>
            <person name="Lin J."/>
            <person name="Yen G."/>
            <person name="Schwartz D.C."/>
            <person name="Welch R.A."/>
            <person name="Blattner F.R."/>
        </authorList>
    </citation>
    <scope>NUCLEOTIDE SEQUENCE [LARGE SCALE GENOMIC DNA]</scope>
    <source>
        <strain>O157:H7 / EDL933 / ATCC 700927 / EHEC</strain>
    </source>
</reference>
<reference key="2">
    <citation type="journal article" date="2001" name="DNA Res.">
        <title>Complete genome sequence of enterohemorrhagic Escherichia coli O157:H7 and genomic comparison with a laboratory strain K-12.</title>
        <authorList>
            <person name="Hayashi T."/>
            <person name="Makino K."/>
            <person name="Ohnishi M."/>
            <person name="Kurokawa K."/>
            <person name="Ishii K."/>
            <person name="Yokoyama K."/>
            <person name="Han C.-G."/>
            <person name="Ohtsubo E."/>
            <person name="Nakayama K."/>
            <person name="Murata T."/>
            <person name="Tanaka M."/>
            <person name="Tobe T."/>
            <person name="Iida T."/>
            <person name="Takami H."/>
            <person name="Honda T."/>
            <person name="Sasakawa C."/>
            <person name="Ogasawara N."/>
            <person name="Yasunaga T."/>
            <person name="Kuhara S."/>
            <person name="Shiba T."/>
            <person name="Hattori M."/>
            <person name="Shinagawa H."/>
        </authorList>
    </citation>
    <scope>NUCLEOTIDE SEQUENCE [LARGE SCALE GENOMIC DNA]</scope>
    <source>
        <strain>O157:H7 / Sakai / RIMD 0509952 / EHEC</strain>
    </source>
</reference>
<accession>Q8X7D6</accession>
<protein>
    <recommendedName>
        <fullName evidence="2">Exoribonuclease 2</fullName>
        <ecNumber evidence="2">3.1.13.1</ecNumber>
    </recommendedName>
    <alternativeName>
        <fullName evidence="2">Exoribonuclease II</fullName>
        <shortName evidence="2">RNase II</shortName>
        <shortName evidence="2">Ribonuclease II</shortName>
    </alternativeName>
</protein>
<sequence length="644" mass="72490">MFQDNPLLAQLKQQLHSQTPRAEGVVKATEKGFGFLEVDAQKSYFIPPPQMKKVMHGDRIIAVIHSEKERESAEPEELVEPFLTRFVGKVQGKNDRLAIVPDHPLLKDAIPCRAARGLNHEFKEGDWAVAEMRRHPLKGDRSFYAELTQYITFGDDHFVPWWVTLARHNLEKEAPDGVATEMLDEGLVRKDLTALDFVTIDSASTEDMDDALFAKALPDDKLQLIVAIADPTAWIAEGSKLDKAAKIRAFTNYLPGFNIPMLPRELSDDLCSLRANEVRPVLACRMTLSADGTIEDNIEFFAATIESKAKLVYDQVSDWLENTGDWQPESEAIAEQVRLLAQICQRRGEWRHNHALVFKDRPDYRFILGEKGEVLDIVAEPRRIANRIVEEAMIAANICAARVLRDKLGFGIYNVHMGFDPANADALAALLKTHGLHVDAEEVLTLDGFCKLRRELDAQPTGFLDSRIRRFQSFAEISTEPGPHFGLGLEAYATWTSPIRKYGDMINHRLLKAVIKGETATRPQDEITVQMAERRRLNRMAERDVGDWLYARFLKDKAGTDTRFAAEIVDISRGGMRVRLVDNGAIAFIPAPFLHAVRDELVCSQENGTVQIKGETVYKVTDVIDVTIAEVRMETRSIIARPVA</sequence>
<comment type="function">
    <text evidence="2">Involved in mRNA degradation. Hydrolyzes single-stranded polyribonucleotides processively in the 3' to 5' direction.</text>
</comment>
<comment type="catalytic activity">
    <reaction evidence="2">
        <text>Exonucleolytic cleavage in the 3'- to 5'-direction to yield nucleoside 5'-phosphates.</text>
        <dbReference type="EC" id="3.1.13.1"/>
    </reaction>
</comment>
<comment type="subcellular location">
    <subcellularLocation>
        <location evidence="2">Cytoplasm</location>
    </subcellularLocation>
</comment>
<comment type="similarity">
    <text evidence="2">Belongs to the RNR ribonuclease family. RNase II subfamily.</text>
</comment>
<name>RNB_ECO57</name>
<gene>
    <name evidence="2" type="primary">rnb</name>
    <name type="ordered locus">Z2514</name>
    <name type="ordered locus">ECs1859</name>
</gene>